<comment type="function">
    <text evidence="1">May be involved in transcription regulation of the alpha 2(I) collagen gene where it binds to the single-stranded polypyrimidine sequences in the promoter region.</text>
</comment>
<comment type="subcellular location">
    <subcellularLocation>
        <location evidence="1">Nucleus</location>
    </subcellularLocation>
</comment>
<comment type="alternative products">
    <event type="alternative splicing"/>
    <isoform>
        <id>Q9D032-1</id>
        <name>1</name>
        <sequence type="displayed"/>
    </isoform>
    <isoform>
        <id>Q9D032-2</id>
        <name>2</name>
        <sequence type="described" ref="VSP_006262"/>
    </isoform>
</comment>
<reference key="1">
    <citation type="submission" date="1999-07" db="EMBL/GenBank/DDBJ databases">
        <title>LAST, a novel protein binding to the SH2 domain of Lck/Src, mediates signaling events of the Src-type tyrosine kinase.</title>
        <authorList>
            <person name="Park C."/>
            <person name="Choi Y.B."/>
            <person name="Park D."/>
            <person name="Hur E.M."/>
            <person name="Yun Y.D."/>
        </authorList>
    </citation>
    <scope>NUCLEOTIDE SEQUENCE [MRNA] (ISOFORM 2)</scope>
    <source>
        <tissue>T-cell lymphoma</tissue>
    </source>
</reference>
<reference key="2">
    <citation type="journal article" date="2002" name="Biochim. Biophys. Acta">
        <title>SSDP1 gene encodes a protein with a conserved N-terminal FORWARD domain.</title>
        <authorList>
            <person name="Bayarsaihan D."/>
        </authorList>
    </citation>
    <scope>NUCLEOTIDE SEQUENCE [MRNA] (ISOFORM 2)</scope>
</reference>
<reference key="3">
    <citation type="journal article" date="2003" name="Development">
        <title>Ssdp proteins bind to LIM-interacting co-factors and regulate the activity of LIM-homeodomain protein complexes in vivo.</title>
        <authorList>
            <person name="van Meyel D.J."/>
            <person name="Thomas J.B."/>
            <person name="Agulnick A.D."/>
        </authorList>
    </citation>
    <scope>NUCLEOTIDE SEQUENCE [MRNA] (ISOFORM 2)</scope>
    <source>
        <strain>C3H/HeJ</strain>
    </source>
</reference>
<reference key="4">
    <citation type="journal article" date="2005" name="Science">
        <title>The transcriptional landscape of the mammalian genome.</title>
        <authorList>
            <person name="Carninci P."/>
            <person name="Kasukawa T."/>
            <person name="Katayama S."/>
            <person name="Gough J."/>
            <person name="Frith M.C."/>
            <person name="Maeda N."/>
            <person name="Oyama R."/>
            <person name="Ravasi T."/>
            <person name="Lenhard B."/>
            <person name="Wells C."/>
            <person name="Kodzius R."/>
            <person name="Shimokawa K."/>
            <person name="Bajic V.B."/>
            <person name="Brenner S.E."/>
            <person name="Batalov S."/>
            <person name="Forrest A.R."/>
            <person name="Zavolan M."/>
            <person name="Davis M.J."/>
            <person name="Wilming L.G."/>
            <person name="Aidinis V."/>
            <person name="Allen J.E."/>
            <person name="Ambesi-Impiombato A."/>
            <person name="Apweiler R."/>
            <person name="Aturaliya R.N."/>
            <person name="Bailey T.L."/>
            <person name="Bansal M."/>
            <person name="Baxter L."/>
            <person name="Beisel K.W."/>
            <person name="Bersano T."/>
            <person name="Bono H."/>
            <person name="Chalk A.M."/>
            <person name="Chiu K.P."/>
            <person name="Choudhary V."/>
            <person name="Christoffels A."/>
            <person name="Clutterbuck D.R."/>
            <person name="Crowe M.L."/>
            <person name="Dalla E."/>
            <person name="Dalrymple B.P."/>
            <person name="de Bono B."/>
            <person name="Della Gatta G."/>
            <person name="di Bernardo D."/>
            <person name="Down T."/>
            <person name="Engstrom P."/>
            <person name="Fagiolini M."/>
            <person name="Faulkner G."/>
            <person name="Fletcher C.F."/>
            <person name="Fukushima T."/>
            <person name="Furuno M."/>
            <person name="Futaki S."/>
            <person name="Gariboldi M."/>
            <person name="Georgii-Hemming P."/>
            <person name="Gingeras T.R."/>
            <person name="Gojobori T."/>
            <person name="Green R.E."/>
            <person name="Gustincich S."/>
            <person name="Harbers M."/>
            <person name="Hayashi Y."/>
            <person name="Hensch T.K."/>
            <person name="Hirokawa N."/>
            <person name="Hill D."/>
            <person name="Huminiecki L."/>
            <person name="Iacono M."/>
            <person name="Ikeo K."/>
            <person name="Iwama A."/>
            <person name="Ishikawa T."/>
            <person name="Jakt M."/>
            <person name="Kanapin A."/>
            <person name="Katoh M."/>
            <person name="Kawasawa Y."/>
            <person name="Kelso J."/>
            <person name="Kitamura H."/>
            <person name="Kitano H."/>
            <person name="Kollias G."/>
            <person name="Krishnan S.P."/>
            <person name="Kruger A."/>
            <person name="Kummerfeld S.K."/>
            <person name="Kurochkin I.V."/>
            <person name="Lareau L.F."/>
            <person name="Lazarevic D."/>
            <person name="Lipovich L."/>
            <person name="Liu J."/>
            <person name="Liuni S."/>
            <person name="McWilliam S."/>
            <person name="Madan Babu M."/>
            <person name="Madera M."/>
            <person name="Marchionni L."/>
            <person name="Matsuda H."/>
            <person name="Matsuzawa S."/>
            <person name="Miki H."/>
            <person name="Mignone F."/>
            <person name="Miyake S."/>
            <person name="Morris K."/>
            <person name="Mottagui-Tabar S."/>
            <person name="Mulder N."/>
            <person name="Nakano N."/>
            <person name="Nakauchi H."/>
            <person name="Ng P."/>
            <person name="Nilsson R."/>
            <person name="Nishiguchi S."/>
            <person name="Nishikawa S."/>
            <person name="Nori F."/>
            <person name="Ohara O."/>
            <person name="Okazaki Y."/>
            <person name="Orlando V."/>
            <person name="Pang K.C."/>
            <person name="Pavan W.J."/>
            <person name="Pavesi G."/>
            <person name="Pesole G."/>
            <person name="Petrovsky N."/>
            <person name="Piazza S."/>
            <person name="Reed J."/>
            <person name="Reid J.F."/>
            <person name="Ring B.Z."/>
            <person name="Ringwald M."/>
            <person name="Rost B."/>
            <person name="Ruan Y."/>
            <person name="Salzberg S.L."/>
            <person name="Sandelin A."/>
            <person name="Schneider C."/>
            <person name="Schoenbach C."/>
            <person name="Sekiguchi K."/>
            <person name="Semple C.A."/>
            <person name="Seno S."/>
            <person name="Sessa L."/>
            <person name="Sheng Y."/>
            <person name="Shibata Y."/>
            <person name="Shimada H."/>
            <person name="Shimada K."/>
            <person name="Silva D."/>
            <person name="Sinclair B."/>
            <person name="Sperling S."/>
            <person name="Stupka E."/>
            <person name="Sugiura K."/>
            <person name="Sultana R."/>
            <person name="Takenaka Y."/>
            <person name="Taki K."/>
            <person name="Tammoja K."/>
            <person name="Tan S.L."/>
            <person name="Tang S."/>
            <person name="Taylor M.S."/>
            <person name="Tegner J."/>
            <person name="Teichmann S.A."/>
            <person name="Ueda H.R."/>
            <person name="van Nimwegen E."/>
            <person name="Verardo R."/>
            <person name="Wei C.L."/>
            <person name="Yagi K."/>
            <person name="Yamanishi H."/>
            <person name="Zabarovsky E."/>
            <person name="Zhu S."/>
            <person name="Zimmer A."/>
            <person name="Hide W."/>
            <person name="Bult C."/>
            <person name="Grimmond S.M."/>
            <person name="Teasdale R.D."/>
            <person name="Liu E.T."/>
            <person name="Brusic V."/>
            <person name="Quackenbush J."/>
            <person name="Wahlestedt C."/>
            <person name="Mattick J.S."/>
            <person name="Hume D.A."/>
            <person name="Kai C."/>
            <person name="Sasaki D."/>
            <person name="Tomaru Y."/>
            <person name="Fukuda S."/>
            <person name="Kanamori-Katayama M."/>
            <person name="Suzuki M."/>
            <person name="Aoki J."/>
            <person name="Arakawa T."/>
            <person name="Iida J."/>
            <person name="Imamura K."/>
            <person name="Itoh M."/>
            <person name="Kato T."/>
            <person name="Kawaji H."/>
            <person name="Kawagashira N."/>
            <person name="Kawashima T."/>
            <person name="Kojima M."/>
            <person name="Kondo S."/>
            <person name="Konno H."/>
            <person name="Nakano K."/>
            <person name="Ninomiya N."/>
            <person name="Nishio T."/>
            <person name="Okada M."/>
            <person name="Plessy C."/>
            <person name="Shibata K."/>
            <person name="Shiraki T."/>
            <person name="Suzuki S."/>
            <person name="Tagami M."/>
            <person name="Waki K."/>
            <person name="Watahiki A."/>
            <person name="Okamura-Oho Y."/>
            <person name="Suzuki H."/>
            <person name="Kawai J."/>
            <person name="Hayashizaki Y."/>
        </authorList>
    </citation>
    <scope>NUCLEOTIDE SEQUENCE [LARGE SCALE MRNA] (ISOFORM 1)</scope>
    <source>
        <strain>C57BL/6J</strain>
        <tissue>Embryo</tissue>
    </source>
</reference>
<reference key="5">
    <citation type="journal article" date="2004" name="Genome Res.">
        <title>The status, quality, and expansion of the NIH full-length cDNA project: the Mammalian Gene Collection (MGC).</title>
        <authorList>
            <consortium name="The MGC Project Team"/>
        </authorList>
    </citation>
    <scope>NUCLEOTIDE SEQUENCE [LARGE SCALE MRNA] (ISOFORM 2)</scope>
</reference>
<reference key="6">
    <citation type="journal article" date="2007" name="Proc. Natl. Acad. Sci. U.S.A.">
        <title>Large-scale phosphorylation analysis of mouse liver.</title>
        <authorList>
            <person name="Villen J."/>
            <person name="Beausoleil S.A."/>
            <person name="Gerber S.A."/>
            <person name="Gygi S.P."/>
        </authorList>
    </citation>
    <scope>PHOSPHORYLATION [LARGE SCALE ANALYSIS] AT SER-347 AND THR-360</scope>
    <scope>IDENTIFICATION BY MASS SPECTROMETRY [LARGE SCALE ANALYSIS]</scope>
    <source>
        <tissue>Liver</tissue>
    </source>
</reference>
<reference key="7">
    <citation type="journal article" date="2010" name="Cell">
        <title>A tissue-specific atlas of mouse protein phosphorylation and expression.</title>
        <authorList>
            <person name="Huttlin E.L."/>
            <person name="Jedrychowski M.P."/>
            <person name="Elias J.E."/>
            <person name="Goswami T."/>
            <person name="Rad R."/>
            <person name="Beausoleil S.A."/>
            <person name="Villen J."/>
            <person name="Haas W."/>
            <person name="Sowa M.E."/>
            <person name="Gygi S.P."/>
        </authorList>
    </citation>
    <scope>PHOSPHORYLATION [LARGE SCALE ANALYSIS] AT SER-347; SER-355 AND THR-360</scope>
    <scope>IDENTIFICATION BY MASS SPECTROMETRY [LARGE SCALE ANALYSIS]</scope>
    <source>
        <tissue>Brain</tissue>
        <tissue>Kidney</tissue>
        <tissue>Lung</tissue>
        <tissue>Spleen</tissue>
    </source>
</reference>
<reference key="8">
    <citation type="journal article" date="2014" name="Mol. Cell. Proteomics">
        <title>Immunoaffinity enrichment and mass spectrometry analysis of protein methylation.</title>
        <authorList>
            <person name="Guo A."/>
            <person name="Gu H."/>
            <person name="Zhou J."/>
            <person name="Mulhern D."/>
            <person name="Wang Y."/>
            <person name="Lee K.A."/>
            <person name="Yang V."/>
            <person name="Aguiar M."/>
            <person name="Kornhauser J."/>
            <person name="Jia X."/>
            <person name="Ren J."/>
            <person name="Beausoleil S.A."/>
            <person name="Silva J.C."/>
            <person name="Vemulapalli V."/>
            <person name="Bedford M.T."/>
            <person name="Comb M.J."/>
        </authorList>
    </citation>
    <scope>METHYLATION [LARGE SCALE ANALYSIS] AT ARG-161 AND ARG-165</scope>
    <scope>IDENTIFICATION BY MASS SPECTROMETRY [LARGE SCALE ANALYSIS]</scope>
    <source>
        <tissue>Embryo</tissue>
    </source>
</reference>
<gene>
    <name type="primary">Ssbp3</name>
    <name type="synonym">Last</name>
    <name type="synonym">Ssdp1</name>
</gene>
<organism>
    <name type="scientific">Mus musculus</name>
    <name type="common">Mouse</name>
    <dbReference type="NCBI Taxonomy" id="10090"/>
    <lineage>
        <taxon>Eukaryota</taxon>
        <taxon>Metazoa</taxon>
        <taxon>Chordata</taxon>
        <taxon>Craniata</taxon>
        <taxon>Vertebrata</taxon>
        <taxon>Euteleostomi</taxon>
        <taxon>Mammalia</taxon>
        <taxon>Eutheria</taxon>
        <taxon>Euarchontoglires</taxon>
        <taxon>Glires</taxon>
        <taxon>Rodentia</taxon>
        <taxon>Myomorpha</taxon>
        <taxon>Muroidea</taxon>
        <taxon>Muridae</taxon>
        <taxon>Murinae</taxon>
        <taxon>Mus</taxon>
        <taxon>Mus</taxon>
    </lineage>
</organism>
<feature type="chain" id="PRO_0000123829" description="Single-stranded DNA-binding protein 3">
    <location>
        <begin position="1"/>
        <end position="388"/>
    </location>
</feature>
<feature type="domain" description="LisH" evidence="3">
    <location>
        <begin position="16"/>
        <end position="48"/>
    </location>
</feature>
<feature type="region of interest" description="Disordered" evidence="4">
    <location>
        <begin position="101"/>
        <end position="388"/>
    </location>
</feature>
<feature type="compositionally biased region" description="Pro residues" evidence="4">
    <location>
        <begin position="126"/>
        <end position="139"/>
    </location>
</feature>
<feature type="compositionally biased region" description="Low complexity" evidence="4">
    <location>
        <begin position="200"/>
        <end position="209"/>
    </location>
</feature>
<feature type="compositionally biased region" description="Low complexity" evidence="4">
    <location>
        <begin position="250"/>
        <end position="268"/>
    </location>
</feature>
<feature type="compositionally biased region" description="Pro residues" evidence="4">
    <location>
        <begin position="272"/>
        <end position="282"/>
    </location>
</feature>
<feature type="compositionally biased region" description="Polar residues" evidence="4">
    <location>
        <begin position="285"/>
        <end position="296"/>
    </location>
</feature>
<feature type="compositionally biased region" description="Gly residues" evidence="4">
    <location>
        <begin position="315"/>
        <end position="325"/>
    </location>
</feature>
<feature type="compositionally biased region" description="Low complexity" evidence="4">
    <location>
        <begin position="346"/>
        <end position="357"/>
    </location>
</feature>
<feature type="compositionally biased region" description="Polar residues" evidence="4">
    <location>
        <begin position="373"/>
        <end position="388"/>
    </location>
</feature>
<feature type="modified residue" description="N-acetylmethionine" evidence="2">
    <location>
        <position position="1"/>
    </location>
</feature>
<feature type="modified residue" description="Asymmetric dimethylarginine" evidence="2">
    <location>
        <position position="155"/>
    </location>
</feature>
<feature type="modified residue" description="Asymmetric dimethylarginine" evidence="12">
    <location>
        <position position="161"/>
    </location>
</feature>
<feature type="modified residue" description="Asymmetric dimethylarginine" evidence="12">
    <location>
        <position position="165"/>
    </location>
</feature>
<feature type="modified residue" description="Phosphoserine" evidence="10 11">
    <location>
        <position position="347"/>
    </location>
</feature>
<feature type="modified residue" description="Phosphoserine" evidence="2">
    <location>
        <position position="352"/>
    </location>
</feature>
<feature type="modified residue" description="Phosphoserine" evidence="11">
    <location>
        <position position="355"/>
    </location>
</feature>
<feature type="modified residue" description="Phosphothreonine" evidence="10 11">
    <location>
        <position position="360"/>
    </location>
</feature>
<feature type="modified residue" description="Phosphoserine" evidence="2">
    <location>
        <position position="381"/>
    </location>
</feature>
<feature type="modified residue" description="Phosphoserine" evidence="2">
    <location>
        <position position="387"/>
    </location>
</feature>
<feature type="splice variant" id="VSP_006262" description="In isoform 2." evidence="5 6 7 8">
    <location>
        <begin position="122"/>
        <end position="148"/>
    </location>
</feature>
<feature type="sequence conflict" description="In Ref. 1; AAG43403." evidence="9" ref="1">
    <original>A</original>
    <variation>D</variation>
    <location>
        <position position="243"/>
    </location>
</feature>
<feature type="sequence conflict" description="In Ref. 4; BAB27882." evidence="9" ref="4">
    <original>A</original>
    <variation>V</variation>
    <location>
        <position position="243"/>
    </location>
</feature>
<feature type="sequence conflict" description="In Ref. 1; AAG43403." evidence="9" ref="1">
    <original>L</original>
    <variation>V</variation>
    <location>
        <position position="335"/>
    </location>
</feature>
<evidence type="ECO:0000250" key="1"/>
<evidence type="ECO:0000250" key="2">
    <source>
        <dbReference type="UniProtKB" id="Q9BWW4"/>
    </source>
</evidence>
<evidence type="ECO:0000255" key="3">
    <source>
        <dbReference type="PROSITE-ProRule" id="PRU00126"/>
    </source>
</evidence>
<evidence type="ECO:0000256" key="4">
    <source>
        <dbReference type="SAM" id="MobiDB-lite"/>
    </source>
</evidence>
<evidence type="ECO:0000303" key="5">
    <source>
    </source>
</evidence>
<evidence type="ECO:0000303" key="6">
    <source>
    </source>
</evidence>
<evidence type="ECO:0000303" key="7">
    <source>
    </source>
</evidence>
<evidence type="ECO:0000303" key="8">
    <source ref="1"/>
</evidence>
<evidence type="ECO:0000305" key="9"/>
<evidence type="ECO:0007744" key="10">
    <source>
    </source>
</evidence>
<evidence type="ECO:0007744" key="11">
    <source>
    </source>
</evidence>
<evidence type="ECO:0007744" key="12">
    <source>
    </source>
</evidence>
<keyword id="KW-0007">Acetylation</keyword>
<keyword id="KW-0025">Alternative splicing</keyword>
<keyword id="KW-0238">DNA-binding</keyword>
<keyword id="KW-0488">Methylation</keyword>
<keyword id="KW-0539">Nucleus</keyword>
<keyword id="KW-0597">Phosphoprotein</keyword>
<keyword id="KW-1185">Reference proteome</keyword>
<keyword id="KW-0804">Transcription</keyword>
<keyword id="KW-0805">Transcription regulation</keyword>
<proteinExistence type="evidence at protein level"/>
<dbReference type="EMBL" id="AF170906">
    <property type="protein sequence ID" value="AAG43403.1"/>
    <property type="molecule type" value="mRNA"/>
</dbReference>
<dbReference type="EMBL" id="AF500117">
    <property type="protein sequence ID" value="AAM22102.1"/>
    <property type="molecule type" value="mRNA"/>
</dbReference>
<dbReference type="EMBL" id="AY167987">
    <property type="protein sequence ID" value="AAN87333.1"/>
    <property type="molecule type" value="mRNA"/>
</dbReference>
<dbReference type="EMBL" id="AK011853">
    <property type="protein sequence ID" value="BAB27882.1"/>
    <property type="molecule type" value="mRNA"/>
</dbReference>
<dbReference type="EMBL" id="BC003430">
    <property type="protein sequence ID" value="AAH03430.1"/>
    <property type="molecule type" value="mRNA"/>
</dbReference>
<dbReference type="CCDS" id="CCDS18427.1">
    <molecule id="Q9D032-1"/>
</dbReference>
<dbReference type="CCDS" id="CCDS18428.1">
    <molecule id="Q9D032-2"/>
</dbReference>
<dbReference type="RefSeq" id="NP_076161.2">
    <molecule id="Q9D032-1"/>
    <property type="nucleotide sequence ID" value="NM_023672.2"/>
</dbReference>
<dbReference type="RefSeq" id="NP_940840.1">
    <molecule id="Q9D032-2"/>
    <property type="nucleotide sequence ID" value="NM_198438.1"/>
</dbReference>
<dbReference type="SMR" id="Q9D032"/>
<dbReference type="BioGRID" id="215389">
    <property type="interactions" value="43"/>
</dbReference>
<dbReference type="DIP" id="DIP-42843N"/>
<dbReference type="FunCoup" id="Q9D032">
    <property type="interactions" value="930"/>
</dbReference>
<dbReference type="IntAct" id="Q9D032">
    <property type="interactions" value="28"/>
</dbReference>
<dbReference type="MINT" id="Q9D032"/>
<dbReference type="STRING" id="10090.ENSMUSP00000030367"/>
<dbReference type="GlyGen" id="Q9D032">
    <property type="glycosylation" value="3 sites, 1 O-linked glycan (3 sites)"/>
</dbReference>
<dbReference type="iPTMnet" id="Q9D032"/>
<dbReference type="PhosphoSitePlus" id="Q9D032"/>
<dbReference type="jPOST" id="Q9D032"/>
<dbReference type="PaxDb" id="10090-ENSMUSP00000030367"/>
<dbReference type="ProteomicsDB" id="257417">
    <molecule id="Q9D032-1"/>
</dbReference>
<dbReference type="ProteomicsDB" id="257418">
    <molecule id="Q9D032-2"/>
</dbReference>
<dbReference type="Pumba" id="Q9D032"/>
<dbReference type="Antibodypedia" id="33182">
    <property type="antibodies" value="120 antibodies from 17 providers"/>
</dbReference>
<dbReference type="DNASU" id="72475"/>
<dbReference type="Ensembl" id="ENSMUST00000030367.15">
    <molecule id="Q9D032-1"/>
    <property type="protein sequence ID" value="ENSMUSP00000030367.9"/>
    <property type="gene ID" value="ENSMUSG00000061887.15"/>
</dbReference>
<dbReference type="Ensembl" id="ENSMUST00000072753.13">
    <molecule id="Q9D032-2"/>
    <property type="protein sequence ID" value="ENSMUSP00000072536.7"/>
    <property type="gene ID" value="ENSMUSG00000061887.15"/>
</dbReference>
<dbReference type="GeneID" id="72475"/>
<dbReference type="KEGG" id="mmu:72475"/>
<dbReference type="UCSC" id="uc008tyx.1">
    <molecule id="Q9D032-1"/>
    <property type="organism name" value="mouse"/>
</dbReference>
<dbReference type="UCSC" id="uc008tyy.1">
    <molecule id="Q9D032-2"/>
    <property type="organism name" value="mouse"/>
</dbReference>
<dbReference type="AGR" id="MGI:1919725"/>
<dbReference type="CTD" id="23648"/>
<dbReference type="MGI" id="MGI:1919725">
    <property type="gene designation" value="Ssbp3"/>
</dbReference>
<dbReference type="VEuPathDB" id="HostDB:ENSMUSG00000061887"/>
<dbReference type="eggNOG" id="KOG4594">
    <property type="taxonomic scope" value="Eukaryota"/>
</dbReference>
<dbReference type="GeneTree" id="ENSGT00950000183049"/>
<dbReference type="InParanoid" id="Q9D032"/>
<dbReference type="OMA" id="HRMGTPN"/>
<dbReference type="OrthoDB" id="5600002at2759"/>
<dbReference type="PhylomeDB" id="Q9D032"/>
<dbReference type="TreeFam" id="TF318961"/>
<dbReference type="BioGRID-ORCS" id="72475">
    <property type="hits" value="8 hits in 77 CRISPR screens"/>
</dbReference>
<dbReference type="ChiTaRS" id="Ssbp3">
    <property type="organism name" value="mouse"/>
</dbReference>
<dbReference type="PRO" id="PR:Q9D032"/>
<dbReference type="Proteomes" id="UP000000589">
    <property type="component" value="Chromosome 4"/>
</dbReference>
<dbReference type="RNAct" id="Q9D032">
    <property type="molecule type" value="protein"/>
</dbReference>
<dbReference type="Bgee" id="ENSMUSG00000061887">
    <property type="expression patterns" value="Expressed in cortical plate and 254 other cell types or tissues"/>
</dbReference>
<dbReference type="ExpressionAtlas" id="Q9D032">
    <property type="expression patterns" value="baseline and differential"/>
</dbReference>
<dbReference type="GO" id="GO:0005634">
    <property type="term" value="C:nucleus"/>
    <property type="evidence" value="ECO:0007669"/>
    <property type="project" value="UniProtKB-SubCell"/>
</dbReference>
<dbReference type="GO" id="GO:0032991">
    <property type="term" value="C:protein-containing complex"/>
    <property type="evidence" value="ECO:0000314"/>
    <property type="project" value="UniProtKB"/>
</dbReference>
<dbReference type="GO" id="GO:0005667">
    <property type="term" value="C:transcription regulator complex"/>
    <property type="evidence" value="ECO:0000314"/>
    <property type="project" value="MGI"/>
</dbReference>
<dbReference type="GO" id="GO:0003697">
    <property type="term" value="F:single-stranded DNA binding"/>
    <property type="evidence" value="ECO:0000266"/>
    <property type="project" value="MGI"/>
</dbReference>
<dbReference type="GO" id="GO:0003713">
    <property type="term" value="F:transcription coactivator activity"/>
    <property type="evidence" value="ECO:0000314"/>
    <property type="project" value="MGI"/>
</dbReference>
<dbReference type="GO" id="GO:0030154">
    <property type="term" value="P:cell differentiation"/>
    <property type="evidence" value="ECO:0000304"/>
    <property type="project" value="MGI"/>
</dbReference>
<dbReference type="GO" id="GO:0060322">
    <property type="term" value="P:head development"/>
    <property type="evidence" value="ECO:0000316"/>
    <property type="project" value="UniProtKB"/>
</dbReference>
<dbReference type="GO" id="GO:0060323">
    <property type="term" value="P:head morphogenesis"/>
    <property type="evidence" value="ECO:0000315"/>
    <property type="project" value="UniProtKB"/>
</dbReference>
<dbReference type="GO" id="GO:0002244">
    <property type="term" value="P:hematopoietic progenitor cell differentiation"/>
    <property type="evidence" value="ECO:0000315"/>
    <property type="project" value="MGI"/>
</dbReference>
<dbReference type="GO" id="GO:0048382">
    <property type="term" value="P:mesendoderm development"/>
    <property type="evidence" value="ECO:0000315"/>
    <property type="project" value="MGI"/>
</dbReference>
<dbReference type="GO" id="GO:0021547">
    <property type="term" value="P:midbrain-hindbrain boundary initiation"/>
    <property type="evidence" value="ECO:0000315"/>
    <property type="project" value="UniProtKB"/>
</dbReference>
<dbReference type="GO" id="GO:2000744">
    <property type="term" value="P:positive regulation of anterior head development"/>
    <property type="evidence" value="ECO:0000315"/>
    <property type="project" value="UniProtKB"/>
</dbReference>
<dbReference type="GO" id="GO:0008284">
    <property type="term" value="P:positive regulation of cell population proliferation"/>
    <property type="evidence" value="ECO:0000315"/>
    <property type="project" value="UniProtKB"/>
</dbReference>
<dbReference type="GO" id="GO:0045893">
    <property type="term" value="P:positive regulation of DNA-templated transcription"/>
    <property type="evidence" value="ECO:0000315"/>
    <property type="project" value="UniProtKB"/>
</dbReference>
<dbReference type="GO" id="GO:0045944">
    <property type="term" value="P:positive regulation of transcription by RNA polymerase II"/>
    <property type="evidence" value="ECO:0000314"/>
    <property type="project" value="UniProtKB"/>
</dbReference>
<dbReference type="GO" id="GO:0021501">
    <property type="term" value="P:prechordal plate formation"/>
    <property type="evidence" value="ECO:0000315"/>
    <property type="project" value="UniProtKB"/>
</dbReference>
<dbReference type="GO" id="GO:0065003">
    <property type="term" value="P:protein-containing complex assembly"/>
    <property type="evidence" value="ECO:0000315"/>
    <property type="project" value="UniProtKB"/>
</dbReference>
<dbReference type="InterPro" id="IPR006594">
    <property type="entry name" value="LisH"/>
</dbReference>
<dbReference type="InterPro" id="IPR008116">
    <property type="entry name" value="SSDP_DNA-bd"/>
</dbReference>
<dbReference type="PANTHER" id="PTHR12610">
    <property type="entry name" value="SINGLE STRANDED DNA BINDING PROTEIN"/>
    <property type="match status" value="1"/>
</dbReference>
<dbReference type="PANTHER" id="PTHR12610:SF22">
    <property type="entry name" value="SINGLE-STRANDED DNA-BINDING PROTEIN 3"/>
    <property type="match status" value="1"/>
</dbReference>
<dbReference type="Pfam" id="PF04503">
    <property type="entry name" value="SSDP"/>
    <property type="match status" value="1"/>
</dbReference>
<dbReference type="PRINTS" id="PR01743">
    <property type="entry name" value="SSDNABINDING"/>
</dbReference>
<dbReference type="SMART" id="SM00667">
    <property type="entry name" value="LisH"/>
    <property type="match status" value="1"/>
</dbReference>
<dbReference type="PROSITE" id="PS50896">
    <property type="entry name" value="LISH"/>
    <property type="match status" value="1"/>
</dbReference>
<name>SSBP3_MOUSE</name>
<accession>Q9D032</accession>
<accession>Q99LC6</accession>
<accession>Q9EQP3</accession>
<sequence>MFAKGKGSAVPSDGQAREKLALYVYEYLLHVGAQKSAQTFLSEIRWEKNITLGEPPGFLHSWWCVFWDLYCAAPERRDTCEHSSEAKAFHDYSAAAAPSPVLGNIPPNDGMPGGPIPPGFFQGPPGSQPSPHAQPPPHNPSSMMGPHSQPFMSPRYAGGPRPPIRMGNQPPGGVPGTQPLLPNSMDPTRQQGHPNMGGSMQRMNPPRGMGPMGPGPQNYGSGMRPPPNSLGPAMPGINMGPGAGRPWPNPNSANSIPYSSSSPGTYVGPPGGGGPPGTPIMPSPADSTNSSDNIYTMINPVPPGGSRSNFPMGPGSDGPMGGMGGMEPHHMNGSLGSGDIDGLPKNSPNNISGISNPPGTPRDDGELGGNFLHSFQNDNYSPSMTMSV</sequence>
<protein>
    <recommendedName>
        <fullName>Single-stranded DNA-binding protein 3</fullName>
    </recommendedName>
    <alternativeName>
        <fullName>Lck-associated signal transducer</fullName>
    </alternativeName>
    <alternativeName>
        <fullName>Sequence-specific single-stranded-DNA-binding protein</fullName>
    </alternativeName>
</protein>